<dbReference type="EC" id="3.4.24.-"/>
<dbReference type="EMBL" id="X57766">
    <property type="protein sequence ID" value="CAA40918.1"/>
    <property type="molecule type" value="mRNA"/>
</dbReference>
<dbReference type="EMBL" id="AY899208">
    <property type="protein sequence ID" value="AAW65373.1"/>
    <property type="molecule type" value="Genomic_DNA"/>
</dbReference>
<dbReference type="EMBL" id="AP000349">
    <property type="status" value="NOT_ANNOTATED_CDS"/>
    <property type="molecule type" value="Genomic_DNA"/>
</dbReference>
<dbReference type="EMBL" id="BC057788">
    <property type="protein sequence ID" value="AAH57788.1"/>
    <property type="molecule type" value="mRNA"/>
</dbReference>
<dbReference type="EMBL" id="X84664">
    <property type="protein sequence ID" value="CAA59150.1"/>
    <property type="molecule type" value="Genomic_DNA"/>
</dbReference>
<dbReference type="CCDS" id="CCDS13816.1"/>
<dbReference type="PIR" id="S13423">
    <property type="entry name" value="S13423"/>
</dbReference>
<dbReference type="RefSeq" id="NP_005931.2">
    <property type="nucleotide sequence ID" value="NM_005940.5"/>
</dbReference>
<dbReference type="SMR" id="P24347"/>
<dbReference type="BioGRID" id="110463">
    <property type="interactions" value="9"/>
</dbReference>
<dbReference type="FunCoup" id="P24347">
    <property type="interactions" value="70"/>
</dbReference>
<dbReference type="STRING" id="9606.ENSP00000215743"/>
<dbReference type="BindingDB" id="P24347"/>
<dbReference type="ChEMBL" id="CHEMBL2867"/>
<dbReference type="DrugBank" id="DB00786">
    <property type="generic name" value="Marimastat"/>
</dbReference>
<dbReference type="DrugBank" id="DB04318">
    <property type="generic name" value="NAlpha-[(2S)-2-{[(S)-[(1S)-1-{[(Benzyloxy)carbonyl]amino}-2-phenylethyl](hydroxy)phosphoryl]methyl}-5-phenylpentanoyl]-L-tryptophanamide"/>
</dbReference>
<dbReference type="GuidetoPHARMACOLOGY" id="1635"/>
<dbReference type="MEROPS" id="M10.007"/>
<dbReference type="GlyGen" id="P24347">
    <property type="glycosylation" value="1 site"/>
</dbReference>
<dbReference type="iPTMnet" id="P24347"/>
<dbReference type="PhosphoSitePlus" id="P24347"/>
<dbReference type="BioMuta" id="MMP11"/>
<dbReference type="DMDM" id="317373418"/>
<dbReference type="MassIVE" id="P24347"/>
<dbReference type="PaxDb" id="9606-ENSP00000215743"/>
<dbReference type="PeptideAtlas" id="P24347"/>
<dbReference type="ProteomicsDB" id="54197"/>
<dbReference type="Antibodypedia" id="3609">
    <property type="antibodies" value="549 antibodies from 36 providers"/>
</dbReference>
<dbReference type="DNASU" id="4320"/>
<dbReference type="Ensembl" id="ENST00000215743.8">
    <property type="protein sequence ID" value="ENSP00000215743.3"/>
    <property type="gene ID" value="ENSG00000099953.10"/>
</dbReference>
<dbReference type="Ensembl" id="ENST00000612388.3">
    <property type="protein sequence ID" value="ENSP00000483349.1"/>
    <property type="gene ID" value="ENSG00000275365.3"/>
</dbReference>
<dbReference type="GeneID" id="4320"/>
<dbReference type="KEGG" id="hsa:4320"/>
<dbReference type="MANE-Select" id="ENST00000215743.8">
    <property type="protein sequence ID" value="ENSP00000215743.3"/>
    <property type="RefSeq nucleotide sequence ID" value="NM_005940.5"/>
    <property type="RefSeq protein sequence ID" value="NP_005931.2"/>
</dbReference>
<dbReference type="UCSC" id="uc002zxx.4">
    <property type="organism name" value="human"/>
</dbReference>
<dbReference type="AGR" id="HGNC:7157"/>
<dbReference type="CTD" id="4320"/>
<dbReference type="DisGeNET" id="4320"/>
<dbReference type="GeneCards" id="MMP11"/>
<dbReference type="HGNC" id="HGNC:7157">
    <property type="gene designation" value="MMP11"/>
</dbReference>
<dbReference type="HPA" id="ENSG00000099953">
    <property type="expression patterns" value="Group enriched (cervix, endometrium, placenta)"/>
</dbReference>
<dbReference type="MIM" id="185261">
    <property type="type" value="gene"/>
</dbReference>
<dbReference type="neXtProt" id="NX_P24347"/>
<dbReference type="OpenTargets" id="ENSG00000099953"/>
<dbReference type="PharmGKB" id="PA30869"/>
<dbReference type="VEuPathDB" id="HostDB:ENSG00000099953"/>
<dbReference type="eggNOG" id="KOG1565">
    <property type="taxonomic scope" value="Eukaryota"/>
</dbReference>
<dbReference type="GeneTree" id="ENSGT00940000156340"/>
<dbReference type="HOGENOM" id="CLU_015489_8_3_1"/>
<dbReference type="InParanoid" id="P24347"/>
<dbReference type="OMA" id="YWRFNPH"/>
<dbReference type="OrthoDB" id="65569at2759"/>
<dbReference type="PAN-GO" id="P24347">
    <property type="GO annotations" value="3 GO annotations based on evolutionary models"/>
</dbReference>
<dbReference type="PhylomeDB" id="P24347"/>
<dbReference type="TreeFam" id="TF315428"/>
<dbReference type="BRENDA" id="3.4.24.B3">
    <property type="organism ID" value="2681"/>
</dbReference>
<dbReference type="PathwayCommons" id="P24347"/>
<dbReference type="Reactome" id="R-HSA-1442490">
    <property type="pathway name" value="Collagen degradation"/>
</dbReference>
<dbReference type="Reactome" id="R-HSA-1474228">
    <property type="pathway name" value="Degradation of the extracellular matrix"/>
</dbReference>
<dbReference type="Reactome" id="R-HSA-1592389">
    <property type="pathway name" value="Activation of Matrix Metalloproteinases"/>
</dbReference>
<dbReference type="SignaLink" id="P24347"/>
<dbReference type="SIGNOR" id="P24347"/>
<dbReference type="BioGRID-ORCS" id="4320">
    <property type="hits" value="13 hits in 1159 CRISPR screens"/>
</dbReference>
<dbReference type="ChiTaRS" id="MMP11">
    <property type="organism name" value="human"/>
</dbReference>
<dbReference type="GeneWiki" id="MMP11"/>
<dbReference type="GenomeRNAi" id="4320"/>
<dbReference type="Pharos" id="P24347">
    <property type="development level" value="Tchem"/>
</dbReference>
<dbReference type="PRO" id="PR:P24347"/>
<dbReference type="Proteomes" id="UP000005640">
    <property type="component" value="Chromosome 22"/>
</dbReference>
<dbReference type="RNAct" id="P24347">
    <property type="molecule type" value="protein"/>
</dbReference>
<dbReference type="Bgee" id="ENSG00000099953">
    <property type="expression patterns" value="Expressed in stromal cell of endometrium and 100 other cell types or tissues"/>
</dbReference>
<dbReference type="ExpressionAtlas" id="P24347">
    <property type="expression patterns" value="baseline and differential"/>
</dbReference>
<dbReference type="GO" id="GO:0031012">
    <property type="term" value="C:extracellular matrix"/>
    <property type="evidence" value="ECO:0000314"/>
    <property type="project" value="MGI"/>
</dbReference>
<dbReference type="GO" id="GO:0005576">
    <property type="term" value="C:extracellular region"/>
    <property type="evidence" value="ECO:0000304"/>
    <property type="project" value="Reactome"/>
</dbReference>
<dbReference type="GO" id="GO:0005615">
    <property type="term" value="C:extracellular space"/>
    <property type="evidence" value="ECO:0000318"/>
    <property type="project" value="GO_Central"/>
</dbReference>
<dbReference type="GO" id="GO:0005796">
    <property type="term" value="C:Golgi lumen"/>
    <property type="evidence" value="ECO:0000304"/>
    <property type="project" value="Reactome"/>
</dbReference>
<dbReference type="GO" id="GO:0004222">
    <property type="term" value="F:metalloendopeptidase activity"/>
    <property type="evidence" value="ECO:0000318"/>
    <property type="project" value="GO_Central"/>
</dbReference>
<dbReference type="GO" id="GO:0004252">
    <property type="term" value="F:serine-type endopeptidase activity"/>
    <property type="evidence" value="ECO:0000304"/>
    <property type="project" value="Reactome"/>
</dbReference>
<dbReference type="GO" id="GO:0008270">
    <property type="term" value="F:zinc ion binding"/>
    <property type="evidence" value="ECO:0007669"/>
    <property type="project" value="InterPro"/>
</dbReference>
<dbReference type="GO" id="GO:0071711">
    <property type="term" value="P:basement membrane organization"/>
    <property type="evidence" value="ECO:0007669"/>
    <property type="project" value="Ensembl"/>
</dbReference>
<dbReference type="GO" id="GO:0030574">
    <property type="term" value="P:collagen catabolic process"/>
    <property type="evidence" value="ECO:0000318"/>
    <property type="project" value="GO_Central"/>
</dbReference>
<dbReference type="GO" id="GO:0030199">
    <property type="term" value="P:collagen fibril organization"/>
    <property type="evidence" value="ECO:0007669"/>
    <property type="project" value="Ensembl"/>
</dbReference>
<dbReference type="GO" id="GO:0022617">
    <property type="term" value="P:extracellular matrix disassembly"/>
    <property type="evidence" value="ECO:0000304"/>
    <property type="project" value="Reactome"/>
</dbReference>
<dbReference type="GO" id="GO:0030198">
    <property type="term" value="P:extracellular matrix organization"/>
    <property type="evidence" value="ECO:0000318"/>
    <property type="project" value="GO_Central"/>
</dbReference>
<dbReference type="GO" id="GO:0045599">
    <property type="term" value="P:negative regulation of fat cell differentiation"/>
    <property type="evidence" value="ECO:0007669"/>
    <property type="project" value="Ensembl"/>
</dbReference>
<dbReference type="GO" id="GO:0006508">
    <property type="term" value="P:proteolysis"/>
    <property type="evidence" value="ECO:0000304"/>
    <property type="project" value="ProtInc"/>
</dbReference>
<dbReference type="CDD" id="cd00094">
    <property type="entry name" value="HX"/>
    <property type="match status" value="1"/>
</dbReference>
<dbReference type="CDD" id="cd04278">
    <property type="entry name" value="ZnMc_MMP"/>
    <property type="match status" value="1"/>
</dbReference>
<dbReference type="FunFam" id="2.110.10.10:FF:000005">
    <property type="entry name" value="Stromelysin-3 preproprotein"/>
    <property type="match status" value="1"/>
</dbReference>
<dbReference type="FunFam" id="3.40.390.10:FF:000020">
    <property type="entry name" value="Stromelysin-3 preproprotein"/>
    <property type="match status" value="1"/>
</dbReference>
<dbReference type="Gene3D" id="3.40.390.10">
    <property type="entry name" value="Collagenase (Catalytic Domain)"/>
    <property type="match status" value="1"/>
</dbReference>
<dbReference type="Gene3D" id="2.110.10.10">
    <property type="entry name" value="Hemopexin-like domain"/>
    <property type="match status" value="1"/>
</dbReference>
<dbReference type="InterPro" id="IPR000585">
    <property type="entry name" value="Hemopexin-like_dom"/>
</dbReference>
<dbReference type="InterPro" id="IPR036375">
    <property type="entry name" value="Hemopexin-like_dom_sf"/>
</dbReference>
<dbReference type="InterPro" id="IPR018487">
    <property type="entry name" value="Hemopexin-like_repeat"/>
</dbReference>
<dbReference type="InterPro" id="IPR018486">
    <property type="entry name" value="Hemopexin_CS"/>
</dbReference>
<dbReference type="InterPro" id="IPR033739">
    <property type="entry name" value="M10A_MMP"/>
</dbReference>
<dbReference type="InterPro" id="IPR024079">
    <property type="entry name" value="MetalloPept_cat_dom_sf"/>
</dbReference>
<dbReference type="InterPro" id="IPR001818">
    <property type="entry name" value="Pept_M10_metallopeptidase"/>
</dbReference>
<dbReference type="InterPro" id="IPR021190">
    <property type="entry name" value="Pept_M10A"/>
</dbReference>
<dbReference type="InterPro" id="IPR021158">
    <property type="entry name" value="Pept_M10A_Zn_BS"/>
</dbReference>
<dbReference type="InterPro" id="IPR006026">
    <property type="entry name" value="Peptidase_Metallo"/>
</dbReference>
<dbReference type="PANTHER" id="PTHR10201">
    <property type="entry name" value="MATRIX METALLOPROTEINASE"/>
    <property type="match status" value="1"/>
</dbReference>
<dbReference type="PANTHER" id="PTHR10201:SF20">
    <property type="entry name" value="STROMELYSIN-3"/>
    <property type="match status" value="1"/>
</dbReference>
<dbReference type="Pfam" id="PF00045">
    <property type="entry name" value="Hemopexin"/>
    <property type="match status" value="4"/>
</dbReference>
<dbReference type="Pfam" id="PF00413">
    <property type="entry name" value="Peptidase_M10"/>
    <property type="match status" value="1"/>
</dbReference>
<dbReference type="PIRSF" id="PIRSF001191">
    <property type="entry name" value="Peptidase_M10A_matrix"/>
    <property type="match status" value="1"/>
</dbReference>
<dbReference type="PRINTS" id="PR00138">
    <property type="entry name" value="MATRIXIN"/>
</dbReference>
<dbReference type="SMART" id="SM00120">
    <property type="entry name" value="HX"/>
    <property type="match status" value="4"/>
</dbReference>
<dbReference type="SMART" id="SM00235">
    <property type="entry name" value="ZnMc"/>
    <property type="match status" value="1"/>
</dbReference>
<dbReference type="SUPFAM" id="SSF50923">
    <property type="entry name" value="Hemopexin-like domain"/>
    <property type="match status" value="1"/>
</dbReference>
<dbReference type="SUPFAM" id="SSF55486">
    <property type="entry name" value="Metalloproteases ('zincins'), catalytic domain"/>
    <property type="match status" value="1"/>
</dbReference>
<dbReference type="PROSITE" id="PS00546">
    <property type="entry name" value="CYSTEINE_SWITCH"/>
    <property type="match status" value="1"/>
</dbReference>
<dbReference type="PROSITE" id="PS00024">
    <property type="entry name" value="HEMOPEXIN"/>
    <property type="match status" value="1"/>
</dbReference>
<dbReference type="PROSITE" id="PS51642">
    <property type="entry name" value="HEMOPEXIN_2"/>
    <property type="match status" value="4"/>
</dbReference>
<dbReference type="PROSITE" id="PS00142">
    <property type="entry name" value="ZINC_PROTEASE"/>
    <property type="match status" value="1"/>
</dbReference>
<gene>
    <name type="primary">MMP11</name>
    <name type="synonym">STMY3</name>
</gene>
<sequence length="488" mass="54590">MAPAAWLRSAAARALLPPMLLLLLQPPPLLARALPPDAHHLHAERRGPQPWHAALPSSPAPAPATQEAPRPASSLRPPRCGVPDPSDGLSARNRQKRFVLSGGRWEKTDLTYRILRFPWQLVQEQVRQTMAEALKVWSDVTPLTFTEVHEGRADIMIDFARYWHGDDLPFDGPGGILAHAFFPKTHREGDVHFDYDETWTIGDDQGTDLLQVAAHEFGHVLGLQHTTAAKALMSAFYTFRYPLSLSPDDCRGVQHLYGQPWPTVTSRTPALGPQAGIDTNEIAPLEPDAPPDACEASFDAVSTIRGELFFFKAGFVWRLRGGQLQPGYPALASRHWQGLPSPVDAAFEDAQGHIWFFQGAQYWVYDGEKPVLGPAPLTELGLVRFPVHAALVWGPEKNKIYFFRGRDYWRFHPSTRRVDSPVPRRATDWRGVPSEIDAAFQDADGYAYFLRGRLYWKFDPVKVKALEGFPRLVGPDFFGCAEPANTFL</sequence>
<protein>
    <recommendedName>
        <fullName>Stromelysin-3</fullName>
        <shortName>SL-3</shortName>
        <shortName>ST3</shortName>
        <ecNumber>3.4.24.-</ecNumber>
    </recommendedName>
    <alternativeName>
        <fullName>Matrix metalloproteinase-11</fullName>
        <shortName>MMP-11</shortName>
    </alternativeName>
</protein>
<feature type="signal peptide" evidence="2">
    <location>
        <begin position="1"/>
        <end position="31"/>
    </location>
</feature>
<feature type="propeptide" id="PRO_0000028770" description="Activation peptide" evidence="1">
    <location>
        <begin position="32"/>
        <end position="97"/>
    </location>
</feature>
<feature type="chain" id="PRO_0000028771" description="Stromelysin-3">
    <location>
        <begin position="98"/>
        <end position="488"/>
    </location>
</feature>
<feature type="repeat" description="Hemopexin 1">
    <location>
        <begin position="291"/>
        <end position="339"/>
    </location>
</feature>
<feature type="repeat" description="Hemopexin 2">
    <location>
        <begin position="340"/>
        <end position="382"/>
    </location>
</feature>
<feature type="repeat" description="Hemopexin 3">
    <location>
        <begin position="384"/>
        <end position="432"/>
    </location>
</feature>
<feature type="repeat" description="Hemopexin 4">
    <location>
        <begin position="433"/>
        <end position="480"/>
    </location>
</feature>
<feature type="region of interest" description="Disordered" evidence="4">
    <location>
        <begin position="41"/>
        <end position="93"/>
    </location>
</feature>
<feature type="short sequence motif" description="Cysteine switch" evidence="1">
    <location>
        <begin position="78"/>
        <end position="85"/>
    </location>
</feature>
<feature type="compositionally biased region" description="Low complexity" evidence="4">
    <location>
        <begin position="50"/>
        <end position="79"/>
    </location>
</feature>
<feature type="active site" evidence="3">
    <location>
        <position position="216"/>
    </location>
</feature>
<feature type="binding site" description="in inhibited form" evidence="1">
    <location>
        <position position="80"/>
    </location>
    <ligand>
        <name>Zn(2+)</name>
        <dbReference type="ChEBI" id="CHEBI:29105"/>
        <label>2</label>
        <note>catalytic</note>
    </ligand>
</feature>
<feature type="binding site" evidence="1">
    <location>
        <position position="166"/>
    </location>
    <ligand>
        <name>Zn(2+)</name>
        <dbReference type="ChEBI" id="CHEBI:29105"/>
        <label>1</label>
    </ligand>
</feature>
<feature type="binding site" evidence="1">
    <location>
        <position position="171"/>
    </location>
    <ligand>
        <name>Ca(2+)</name>
        <dbReference type="ChEBI" id="CHEBI:29108"/>
    </ligand>
</feature>
<feature type="binding site" evidence="1">
    <location>
        <position position="172"/>
    </location>
    <ligand>
        <name>Ca(2+)</name>
        <dbReference type="ChEBI" id="CHEBI:29108"/>
    </ligand>
</feature>
<feature type="binding site" evidence="1">
    <location>
        <position position="174"/>
    </location>
    <ligand>
        <name>Ca(2+)</name>
        <dbReference type="ChEBI" id="CHEBI:29108"/>
    </ligand>
</feature>
<feature type="binding site" evidence="1">
    <location>
        <position position="176"/>
    </location>
    <ligand>
        <name>Ca(2+)</name>
        <dbReference type="ChEBI" id="CHEBI:29108"/>
    </ligand>
</feature>
<feature type="binding site" evidence="1">
    <location>
        <position position="179"/>
    </location>
    <ligand>
        <name>Zn(2+)</name>
        <dbReference type="ChEBI" id="CHEBI:29105"/>
        <label>1</label>
    </ligand>
</feature>
<feature type="binding site" evidence="1">
    <location>
        <position position="192"/>
    </location>
    <ligand>
        <name>Zn(2+)</name>
        <dbReference type="ChEBI" id="CHEBI:29105"/>
        <label>1</label>
    </ligand>
</feature>
<feature type="binding site" evidence="1">
    <location>
        <position position="215"/>
    </location>
    <ligand>
        <name>Zn(2+)</name>
        <dbReference type="ChEBI" id="CHEBI:29105"/>
        <label>2</label>
        <note>catalytic</note>
    </ligand>
</feature>
<feature type="binding site" evidence="1">
    <location>
        <position position="219"/>
    </location>
    <ligand>
        <name>Zn(2+)</name>
        <dbReference type="ChEBI" id="CHEBI:29105"/>
        <label>2</label>
        <note>catalytic</note>
    </ligand>
</feature>
<feature type="binding site" evidence="1">
    <location>
        <position position="225"/>
    </location>
    <ligand>
        <name>Zn(2+)</name>
        <dbReference type="ChEBI" id="CHEBI:29105"/>
        <label>2</label>
        <note>catalytic</note>
    </ligand>
</feature>
<feature type="disulfide bond" evidence="1">
    <location>
        <begin position="294"/>
        <end position="480"/>
    </location>
</feature>
<feature type="sequence variant" id="VAR_022181" description="In dbSNP:rs738792." evidence="7 8">
    <original>A</original>
    <variation>V</variation>
    <location>
        <position position="38"/>
    </location>
</feature>
<feature type="sequence variant" id="VAR_022182" description="In dbSNP:rs28363646." evidence="8">
    <original>E</original>
    <variation>K</variation>
    <location>
        <position position="44"/>
    </location>
</feature>
<feature type="sequence variant" id="VAR_022183" description="In dbSNP:rs28363647." evidence="8">
    <original>P</original>
    <variation>L</variation>
    <location>
        <position position="61"/>
    </location>
</feature>
<feature type="sequence variant" id="VAR_022184" description="In dbSNP:rs28363648." evidence="8">
    <original>S</original>
    <variation>P</variation>
    <location>
        <position position="86"/>
    </location>
</feature>
<feature type="sequence variant" id="VAR_036140" description="In a colorectal cancer sample; somatic mutation." evidence="6">
    <original>D</original>
    <variation>N</variation>
    <location>
        <position position="166"/>
    </location>
</feature>
<feature type="sequence variant" id="VAR_029659" description="In dbSNP:rs17854940." evidence="5">
    <original>F</original>
    <variation>S</variation>
    <location>
        <position position="182"/>
    </location>
</feature>
<proteinExistence type="evidence at protein level"/>
<comment type="function">
    <text>May play an important role in the progression of epithelial malignancies.</text>
</comment>
<comment type="cofactor">
    <cofactor evidence="1">
        <name>Ca(2+)</name>
        <dbReference type="ChEBI" id="CHEBI:29108"/>
    </cofactor>
    <text evidence="1">Binds 1 Ca(2+) ion per subunit.</text>
</comment>
<comment type="cofactor">
    <cofactor evidence="1">
        <name>Zn(2+)</name>
        <dbReference type="ChEBI" id="CHEBI:29105"/>
    </cofactor>
    <text evidence="1">Binds 2 Zn(2+) ions per subunit.</text>
</comment>
<comment type="subcellular location">
    <subcellularLocation>
        <location evidence="9">Secreted</location>
        <location evidence="9">Extracellular space</location>
        <location evidence="9">Extracellular matrix</location>
    </subcellularLocation>
</comment>
<comment type="tissue specificity">
    <text>Specifically expressed in stromal cells of breast carcinomas.</text>
</comment>
<comment type="domain">
    <text>The conserved cysteine present in the cysteine-switch motif binds the catalytic zinc ion, thus inhibiting the enzyme. The dissociation of the cysteine from the zinc ion upon the activation-peptide release activates the enzyme.</text>
</comment>
<comment type="PTM">
    <text evidence="1">The precursor is cleaved by a furin endopeptidase.</text>
</comment>
<comment type="similarity">
    <text evidence="9">Belongs to the peptidase M10A family.</text>
</comment>
<comment type="online information" name="Atlas of Genetics and Cytogenetics in Oncology and Haematology">
    <link uri="https://atlasgeneticsoncology.org/gene/200/ST3"/>
</comment>
<organism>
    <name type="scientific">Homo sapiens</name>
    <name type="common">Human</name>
    <dbReference type="NCBI Taxonomy" id="9606"/>
    <lineage>
        <taxon>Eukaryota</taxon>
        <taxon>Metazoa</taxon>
        <taxon>Chordata</taxon>
        <taxon>Craniata</taxon>
        <taxon>Vertebrata</taxon>
        <taxon>Euteleostomi</taxon>
        <taxon>Mammalia</taxon>
        <taxon>Eutheria</taxon>
        <taxon>Euarchontoglires</taxon>
        <taxon>Primates</taxon>
        <taxon>Haplorrhini</taxon>
        <taxon>Catarrhini</taxon>
        <taxon>Hominidae</taxon>
        <taxon>Homo</taxon>
    </lineage>
</organism>
<keyword id="KW-0106">Calcium</keyword>
<keyword id="KW-0165">Cleavage on pair of basic residues</keyword>
<keyword id="KW-0177">Collagen degradation</keyword>
<keyword id="KW-0903">Direct protein sequencing</keyword>
<keyword id="KW-1015">Disulfide bond</keyword>
<keyword id="KW-0272">Extracellular matrix</keyword>
<keyword id="KW-0378">Hydrolase</keyword>
<keyword id="KW-0479">Metal-binding</keyword>
<keyword id="KW-0482">Metalloprotease</keyword>
<keyword id="KW-0645">Protease</keyword>
<keyword id="KW-1267">Proteomics identification</keyword>
<keyword id="KW-1185">Reference proteome</keyword>
<keyword id="KW-0677">Repeat</keyword>
<keyword id="KW-0964">Secreted</keyword>
<keyword id="KW-0732">Signal</keyword>
<keyword id="KW-0862">Zinc</keyword>
<keyword id="KW-0865">Zymogen</keyword>
<accession>P24347</accession>
<accession>Q5FX24</accession>
<accession>Q6PEZ6</accession>
<accession>Q9UC26</accession>
<reference key="1">
    <citation type="journal article" date="1990" name="Nature">
        <title>A novel metalloproteinase gene specifically expressed in stromal cells of breast carcinomas.</title>
        <authorList>
            <person name="Basset P."/>
            <person name="Bellocq J.-P."/>
            <person name="Wolf C."/>
            <person name="Stoll I."/>
            <person name="Hutin P."/>
            <person name="Limacher J.-M."/>
            <person name="Podhajcer O.L."/>
            <person name="Chenard M.P."/>
            <person name="Rio M.C."/>
            <person name="Chambon P."/>
        </authorList>
    </citation>
    <scope>NUCLEOTIDE SEQUENCE [MRNA]</scope>
    <scope>VARIANT VAL-38</scope>
</reference>
<reference key="2">
    <citation type="submission" date="2005-01" db="EMBL/GenBank/DDBJ databases">
        <authorList>
            <consortium name="NIEHS SNPs program"/>
        </authorList>
    </citation>
    <scope>NUCLEOTIDE SEQUENCE [GENOMIC DNA]</scope>
    <scope>VARIANTS VAL-38; LYS-44; LEU-61 AND PRO-86</scope>
</reference>
<reference key="3">
    <citation type="journal article" date="1999" name="Nature">
        <title>The DNA sequence of human chromosome 22.</title>
        <authorList>
            <person name="Dunham I."/>
            <person name="Hunt A.R."/>
            <person name="Collins J.E."/>
            <person name="Bruskiewich R."/>
            <person name="Beare D.M."/>
            <person name="Clamp M."/>
            <person name="Smink L.J."/>
            <person name="Ainscough R."/>
            <person name="Almeida J.P."/>
            <person name="Babbage A.K."/>
            <person name="Bagguley C."/>
            <person name="Bailey J."/>
            <person name="Barlow K.F."/>
            <person name="Bates K.N."/>
            <person name="Beasley O.P."/>
            <person name="Bird C.P."/>
            <person name="Blakey S.E."/>
            <person name="Bridgeman A.M."/>
            <person name="Buck D."/>
            <person name="Burgess J."/>
            <person name="Burrill W.D."/>
            <person name="Burton J."/>
            <person name="Carder C."/>
            <person name="Carter N.P."/>
            <person name="Chen Y."/>
            <person name="Clark G."/>
            <person name="Clegg S.M."/>
            <person name="Cobley V.E."/>
            <person name="Cole C.G."/>
            <person name="Collier R.E."/>
            <person name="Connor R."/>
            <person name="Conroy D."/>
            <person name="Corby N.R."/>
            <person name="Coville G.J."/>
            <person name="Cox A.V."/>
            <person name="Davis J."/>
            <person name="Dawson E."/>
            <person name="Dhami P.D."/>
            <person name="Dockree C."/>
            <person name="Dodsworth S.J."/>
            <person name="Durbin R.M."/>
            <person name="Ellington A.G."/>
            <person name="Evans K.L."/>
            <person name="Fey J.M."/>
            <person name="Fleming K."/>
            <person name="French L."/>
            <person name="Garner A.A."/>
            <person name="Gilbert J.G.R."/>
            <person name="Goward M.E."/>
            <person name="Grafham D.V."/>
            <person name="Griffiths M.N.D."/>
            <person name="Hall C."/>
            <person name="Hall R.E."/>
            <person name="Hall-Tamlyn G."/>
            <person name="Heathcott R.W."/>
            <person name="Ho S."/>
            <person name="Holmes S."/>
            <person name="Hunt S.E."/>
            <person name="Jones M.C."/>
            <person name="Kershaw J."/>
            <person name="Kimberley A.M."/>
            <person name="King A."/>
            <person name="Laird G.K."/>
            <person name="Langford C.F."/>
            <person name="Leversha M.A."/>
            <person name="Lloyd C."/>
            <person name="Lloyd D.M."/>
            <person name="Martyn I.D."/>
            <person name="Mashreghi-Mohammadi M."/>
            <person name="Matthews L.H."/>
            <person name="Mccann O.T."/>
            <person name="Mcclay J."/>
            <person name="Mclaren S."/>
            <person name="McMurray A.A."/>
            <person name="Milne S.A."/>
            <person name="Mortimore B.J."/>
            <person name="Odell C.N."/>
            <person name="Pavitt R."/>
            <person name="Pearce A.V."/>
            <person name="Pearson D."/>
            <person name="Phillimore B.J.C.T."/>
            <person name="Phillips S.H."/>
            <person name="Plumb R.W."/>
            <person name="Ramsay H."/>
            <person name="Ramsey Y."/>
            <person name="Rogers L."/>
            <person name="Ross M.T."/>
            <person name="Scott C.E."/>
            <person name="Sehra H.K."/>
            <person name="Skuce C.D."/>
            <person name="Smalley S."/>
            <person name="Smith M.L."/>
            <person name="Soderlund C."/>
            <person name="Spragon L."/>
            <person name="Steward C.A."/>
            <person name="Sulston J.E."/>
            <person name="Swann R.M."/>
            <person name="Vaudin M."/>
            <person name="Wall M."/>
            <person name="Wallis J.M."/>
            <person name="Whiteley M.N."/>
            <person name="Willey D.L."/>
            <person name="Williams L."/>
            <person name="Williams S.A."/>
            <person name="Williamson H."/>
            <person name="Wilmer T.E."/>
            <person name="Wilming L."/>
            <person name="Wright C.L."/>
            <person name="Hubbard T."/>
            <person name="Bentley D.R."/>
            <person name="Beck S."/>
            <person name="Rogers J."/>
            <person name="Shimizu N."/>
            <person name="Minoshima S."/>
            <person name="Kawasaki K."/>
            <person name="Sasaki T."/>
            <person name="Asakawa S."/>
            <person name="Kudoh J."/>
            <person name="Shintani A."/>
            <person name="Shibuya K."/>
            <person name="Yoshizaki Y."/>
            <person name="Aoki N."/>
            <person name="Mitsuyama S."/>
            <person name="Roe B.A."/>
            <person name="Chen F."/>
            <person name="Chu L."/>
            <person name="Crabtree J."/>
            <person name="Deschamps S."/>
            <person name="Do A."/>
            <person name="Do T."/>
            <person name="Dorman A."/>
            <person name="Fang F."/>
            <person name="Fu Y."/>
            <person name="Hu P."/>
            <person name="Hua A."/>
            <person name="Kenton S."/>
            <person name="Lai H."/>
            <person name="Lao H.I."/>
            <person name="Lewis J."/>
            <person name="Lewis S."/>
            <person name="Lin S.-P."/>
            <person name="Loh P."/>
            <person name="Malaj E."/>
            <person name="Nguyen T."/>
            <person name="Pan H."/>
            <person name="Phan S."/>
            <person name="Qi S."/>
            <person name="Qian Y."/>
            <person name="Ray L."/>
            <person name="Ren Q."/>
            <person name="Shaull S."/>
            <person name="Sloan D."/>
            <person name="Song L."/>
            <person name="Wang Q."/>
            <person name="Wang Y."/>
            <person name="Wang Z."/>
            <person name="White J."/>
            <person name="Willingham D."/>
            <person name="Wu H."/>
            <person name="Yao Z."/>
            <person name="Zhan M."/>
            <person name="Zhang G."/>
            <person name="Chissoe S."/>
            <person name="Murray J."/>
            <person name="Miller N."/>
            <person name="Minx P."/>
            <person name="Fulton R."/>
            <person name="Johnson D."/>
            <person name="Bemis G."/>
            <person name="Bentley D."/>
            <person name="Bradshaw H."/>
            <person name="Bourne S."/>
            <person name="Cordes M."/>
            <person name="Du Z."/>
            <person name="Fulton L."/>
            <person name="Goela D."/>
            <person name="Graves T."/>
            <person name="Hawkins J."/>
            <person name="Hinds K."/>
            <person name="Kemp K."/>
            <person name="Latreille P."/>
            <person name="Layman D."/>
            <person name="Ozersky P."/>
            <person name="Rohlfing T."/>
            <person name="Scheet P."/>
            <person name="Walker C."/>
            <person name="Wamsley A."/>
            <person name="Wohldmann P."/>
            <person name="Pepin K."/>
            <person name="Nelson J."/>
            <person name="Korf I."/>
            <person name="Bedell J.A."/>
            <person name="Hillier L.W."/>
            <person name="Mardis E."/>
            <person name="Waterston R."/>
            <person name="Wilson R."/>
            <person name="Emanuel B.S."/>
            <person name="Shaikh T."/>
            <person name="Kurahashi H."/>
            <person name="Saitta S."/>
            <person name="Budarf M.L."/>
            <person name="McDermid H.E."/>
            <person name="Johnson A."/>
            <person name="Wong A.C.C."/>
            <person name="Morrow B.E."/>
            <person name="Edelmann L."/>
            <person name="Kim U.J."/>
            <person name="Shizuya H."/>
            <person name="Simon M.I."/>
            <person name="Dumanski J.P."/>
            <person name="Peyrard M."/>
            <person name="Kedra D."/>
            <person name="Seroussi E."/>
            <person name="Fransson I."/>
            <person name="Tapia I."/>
            <person name="Bruder C.E."/>
            <person name="O'Brien K.P."/>
            <person name="Wilkinson P."/>
            <person name="Bodenteich A."/>
            <person name="Hartman K."/>
            <person name="Hu X."/>
            <person name="Khan A.S."/>
            <person name="Lane L."/>
            <person name="Tilahun Y."/>
            <person name="Wright H."/>
        </authorList>
    </citation>
    <scope>NUCLEOTIDE SEQUENCE [LARGE SCALE GENOMIC DNA]</scope>
</reference>
<reference key="4">
    <citation type="journal article" date="2004" name="Genome Res.">
        <title>The status, quality, and expansion of the NIH full-length cDNA project: the Mammalian Gene Collection (MGC).</title>
        <authorList>
            <consortium name="The MGC Project Team"/>
        </authorList>
    </citation>
    <scope>NUCLEOTIDE SEQUENCE [LARGE SCALE MRNA]</scope>
    <scope>VARIANT SER-182</scope>
    <source>
        <tissue>Placenta</tissue>
    </source>
</reference>
<reference key="5">
    <citation type="journal article" date="1995" name="J. Biol. Chem.">
        <title>Structure and promoter characterization of the human stromelysin-3 gene.</title>
        <authorList>
            <person name="Anglard P."/>
            <person name="Melot T."/>
            <person name="Guerin E."/>
            <person name="Thomas G."/>
            <person name="Basset P."/>
        </authorList>
    </citation>
    <scope>NUCLEOTIDE SEQUENCE [GENOMIC DNA] OF 1-36</scope>
</reference>
<reference key="6">
    <citation type="journal article" date="1995" name="Nature">
        <title>Furin-dependent intracellular activation of the human stromelysin-3 zymogen.</title>
        <authorList>
            <person name="Pei D."/>
            <person name="Weiss S.J."/>
        </authorList>
    </citation>
    <scope>PROTEIN SEQUENCE OF 81-101</scope>
</reference>
<reference key="7">
    <citation type="journal article" date="2006" name="Science">
        <title>The consensus coding sequences of human breast and colorectal cancers.</title>
        <authorList>
            <person name="Sjoeblom T."/>
            <person name="Jones S."/>
            <person name="Wood L.D."/>
            <person name="Parsons D.W."/>
            <person name="Lin J."/>
            <person name="Barber T.D."/>
            <person name="Mandelker D."/>
            <person name="Leary R.J."/>
            <person name="Ptak J."/>
            <person name="Silliman N."/>
            <person name="Szabo S."/>
            <person name="Buckhaults P."/>
            <person name="Farrell C."/>
            <person name="Meeh P."/>
            <person name="Markowitz S.D."/>
            <person name="Willis J."/>
            <person name="Dawson D."/>
            <person name="Willson J.K.V."/>
            <person name="Gazdar A.F."/>
            <person name="Hartigan J."/>
            <person name="Wu L."/>
            <person name="Liu C."/>
            <person name="Parmigiani G."/>
            <person name="Park B.H."/>
            <person name="Bachman K.E."/>
            <person name="Papadopoulos N."/>
            <person name="Vogelstein B."/>
            <person name="Kinzler K.W."/>
            <person name="Velculescu V.E."/>
        </authorList>
    </citation>
    <scope>VARIANT [LARGE SCALE ANALYSIS] ASN-166</scope>
</reference>
<name>MMP11_HUMAN</name>
<evidence type="ECO:0000250" key="1"/>
<evidence type="ECO:0000255" key="2"/>
<evidence type="ECO:0000255" key="3">
    <source>
        <dbReference type="PROSITE-ProRule" id="PRU10095"/>
    </source>
</evidence>
<evidence type="ECO:0000256" key="4">
    <source>
        <dbReference type="SAM" id="MobiDB-lite"/>
    </source>
</evidence>
<evidence type="ECO:0000269" key="5">
    <source>
    </source>
</evidence>
<evidence type="ECO:0000269" key="6">
    <source>
    </source>
</evidence>
<evidence type="ECO:0000269" key="7">
    <source>
    </source>
</evidence>
<evidence type="ECO:0000269" key="8">
    <source ref="2"/>
</evidence>
<evidence type="ECO:0000305" key="9"/>